<name>DEFB1_TRAOB</name>
<keyword id="KW-0044">Antibiotic</keyword>
<keyword id="KW-0929">Antimicrobial</keyword>
<keyword id="KW-0211">Defensin</keyword>
<keyword id="KW-1015">Disulfide bond</keyword>
<keyword id="KW-0472">Membrane</keyword>
<keyword id="KW-0964">Secreted</keyword>
<keyword id="KW-0732">Signal</keyword>
<reference key="1">
    <citation type="journal article" date="2002" name="Immunogenetics">
        <title>Beta-defensin 1 gene variability among non-human primates.</title>
        <authorList>
            <person name="Del Pero M."/>
            <person name="Boniotto M."/>
            <person name="Zuccon D."/>
            <person name="Cervella P."/>
            <person name="Spano A."/>
            <person name="Amoroso A."/>
            <person name="Crovella S."/>
        </authorList>
    </citation>
    <scope>NUCLEOTIDE SEQUENCE [GENOMIC DNA]</scope>
</reference>
<feature type="signal peptide" evidence="3">
    <location>
        <begin position="1"/>
        <end position="21"/>
    </location>
</feature>
<feature type="propeptide" id="PRO_0000006921" evidence="1">
    <location>
        <begin position="22"/>
        <end position="32"/>
    </location>
</feature>
<feature type="peptide" id="PRO_0000006922" description="Beta-defensin 1">
    <location>
        <begin position="33"/>
        <end position="68"/>
    </location>
</feature>
<feature type="disulfide bond" evidence="1">
    <location>
        <begin position="37"/>
        <end position="66"/>
    </location>
</feature>
<feature type="disulfide bond" evidence="1">
    <location>
        <begin position="44"/>
        <end position="59"/>
    </location>
</feature>
<feature type="disulfide bond" evidence="1">
    <location>
        <begin position="49"/>
        <end position="67"/>
    </location>
</feature>
<evidence type="ECO:0000250" key="1"/>
<evidence type="ECO:0000250" key="2">
    <source>
        <dbReference type="UniProtKB" id="P60022"/>
    </source>
</evidence>
<evidence type="ECO:0000255" key="3"/>
<evidence type="ECO:0000305" key="4"/>
<gene>
    <name type="primary">DEFB1</name>
</gene>
<sequence length="68" mass="7562">MRTSYLLLFTLCLLMSEMASGDNFLTGLGHRSDHYNCVRSGGQCLYSACPIYTKIQGTCYHGKAKCCK</sequence>
<protein>
    <recommendedName>
        <fullName>Beta-defensin 1</fullName>
        <shortName>BD-1</shortName>
    </recommendedName>
    <alternativeName>
        <fullName>Defensin, beta 1</fullName>
    </alternativeName>
</protein>
<accession>Q7JGL9</accession>
<comment type="function">
    <text evidence="2">Has bactericidal activity. May act as a ligand for C-C chemokine receptor CCR6. Positively regulates the sperm motility and bactericidal activity in a CCR6-dependent manner. Binds to CCR6 and triggers Ca2+ mobilization in the sperm which is important for its motility.</text>
</comment>
<comment type="subunit">
    <text evidence="2">Monomer. Homodimer.</text>
</comment>
<comment type="subcellular location">
    <subcellularLocation>
        <location evidence="2">Secreted</location>
    </subcellularLocation>
    <subcellularLocation>
        <location evidence="2">Membrane</location>
    </subcellularLocation>
    <text evidence="2">Associates with tumor cell membrane-derived microvesicles.</text>
</comment>
<comment type="similarity">
    <text evidence="4">Belongs to the beta-defensin family.</text>
</comment>
<dbReference type="EMBL" id="AY033756">
    <property type="protein sequence ID" value="AAK61468.1"/>
    <property type="molecule type" value="Genomic_DNA"/>
</dbReference>
<dbReference type="EMBL" id="AY033741">
    <property type="protein sequence ID" value="AAK61468.1"/>
    <property type="status" value="JOINED"/>
    <property type="molecule type" value="Genomic_DNA"/>
</dbReference>
<dbReference type="SMR" id="Q7JGL9"/>
<dbReference type="GO" id="GO:0005615">
    <property type="term" value="C:extracellular space"/>
    <property type="evidence" value="ECO:0007669"/>
    <property type="project" value="TreeGrafter"/>
</dbReference>
<dbReference type="GO" id="GO:0016020">
    <property type="term" value="C:membrane"/>
    <property type="evidence" value="ECO:0000250"/>
    <property type="project" value="UniProtKB"/>
</dbReference>
<dbReference type="GO" id="GO:1990742">
    <property type="term" value="C:microvesicle"/>
    <property type="evidence" value="ECO:0000250"/>
    <property type="project" value="UniProtKB"/>
</dbReference>
<dbReference type="GO" id="GO:0097225">
    <property type="term" value="C:sperm midpiece"/>
    <property type="evidence" value="ECO:0000250"/>
    <property type="project" value="UniProtKB"/>
</dbReference>
<dbReference type="GO" id="GO:0031731">
    <property type="term" value="F:CCR6 chemokine receptor binding"/>
    <property type="evidence" value="ECO:0000250"/>
    <property type="project" value="UniProtKB"/>
</dbReference>
<dbReference type="GO" id="GO:0042802">
    <property type="term" value="F:identical protein binding"/>
    <property type="evidence" value="ECO:0000250"/>
    <property type="project" value="UniProtKB"/>
</dbReference>
<dbReference type="GO" id="GO:0019722">
    <property type="term" value="P:calcium-mediated signaling"/>
    <property type="evidence" value="ECO:0000250"/>
    <property type="project" value="UniProtKB"/>
</dbReference>
<dbReference type="GO" id="GO:0050829">
    <property type="term" value="P:defense response to Gram-negative bacterium"/>
    <property type="evidence" value="ECO:0000250"/>
    <property type="project" value="UniProtKB"/>
</dbReference>
<dbReference type="GO" id="GO:0050830">
    <property type="term" value="P:defense response to Gram-positive bacterium"/>
    <property type="evidence" value="ECO:0000250"/>
    <property type="project" value="UniProtKB"/>
</dbReference>
<dbReference type="GO" id="GO:0002227">
    <property type="term" value="P:innate immune response in mucosa"/>
    <property type="evidence" value="ECO:0007669"/>
    <property type="project" value="TreeGrafter"/>
</dbReference>
<dbReference type="GO" id="GO:0060474">
    <property type="term" value="P:positive regulation of flagellated sperm motility involved in capacitation"/>
    <property type="evidence" value="ECO:0000250"/>
    <property type="project" value="UniProtKB"/>
</dbReference>
<dbReference type="FunFam" id="3.10.360.10:FF:000001">
    <property type="entry name" value="Beta-defensin 1"/>
    <property type="match status" value="1"/>
</dbReference>
<dbReference type="Gene3D" id="3.10.360.10">
    <property type="entry name" value="Antimicrobial Peptide, Beta-defensin 2, Chain A"/>
    <property type="match status" value="1"/>
</dbReference>
<dbReference type="InterPro" id="IPR001855">
    <property type="entry name" value="Defensin_beta-like"/>
</dbReference>
<dbReference type="PANTHER" id="PTHR21388:SF9">
    <property type="entry name" value="BETA-DEFENSIN 1"/>
    <property type="match status" value="1"/>
</dbReference>
<dbReference type="PANTHER" id="PTHR21388">
    <property type="entry name" value="BETA-DEFENSIN-RELATED"/>
    <property type="match status" value="1"/>
</dbReference>
<dbReference type="Pfam" id="PF00711">
    <property type="entry name" value="Defensin_beta"/>
    <property type="match status" value="1"/>
</dbReference>
<dbReference type="SUPFAM" id="SSF57392">
    <property type="entry name" value="Defensin-like"/>
    <property type="match status" value="1"/>
</dbReference>
<organism>
    <name type="scientific">Trachypithecus obscurus</name>
    <name type="common">Dusky leaf-monkey</name>
    <name type="synonym">Presbytis obscura</name>
    <dbReference type="NCBI Taxonomy" id="54181"/>
    <lineage>
        <taxon>Eukaryota</taxon>
        <taxon>Metazoa</taxon>
        <taxon>Chordata</taxon>
        <taxon>Craniata</taxon>
        <taxon>Vertebrata</taxon>
        <taxon>Euteleostomi</taxon>
        <taxon>Mammalia</taxon>
        <taxon>Eutheria</taxon>
        <taxon>Euarchontoglires</taxon>
        <taxon>Primates</taxon>
        <taxon>Haplorrhini</taxon>
        <taxon>Catarrhini</taxon>
        <taxon>Cercopithecidae</taxon>
        <taxon>Colobinae</taxon>
        <taxon>Trachypithecus</taxon>
    </lineage>
</organism>
<proteinExistence type="inferred from homology"/>